<keyword id="KW-0025">Alternative splicing</keyword>
<keyword id="KW-0597">Phosphoprotein</keyword>
<keyword id="KW-1185">Reference proteome</keyword>
<keyword id="KW-0727">SH2 domain</keyword>
<dbReference type="EMBL" id="AB018423">
    <property type="protein sequence ID" value="BAA33805.1"/>
    <property type="molecule type" value="mRNA"/>
</dbReference>
<dbReference type="EMBL" id="AK142491">
    <property type="protein sequence ID" value="BAE25084.1"/>
    <property type="molecule type" value="mRNA"/>
</dbReference>
<dbReference type="EMBL" id="AK164639">
    <property type="protein sequence ID" value="BAE37855.1"/>
    <property type="molecule type" value="mRNA"/>
</dbReference>
<dbReference type="EMBL" id="BC103798">
    <property type="protein sequence ID" value="AAI03799.1"/>
    <property type="molecule type" value="mRNA"/>
</dbReference>
<dbReference type="CCDS" id="CCDS50149.1">
    <molecule id="O88834-2"/>
</dbReference>
<dbReference type="CCDS" id="CCDS89120.1">
    <molecule id="O88834-1"/>
</dbReference>
<dbReference type="RefSeq" id="NP_001152995.1">
    <molecule id="O88834-2"/>
    <property type="nucleotide sequence ID" value="NM_001159523.2"/>
</dbReference>
<dbReference type="RefSeq" id="NP_001397594.1">
    <molecule id="O88834-2"/>
    <property type="nucleotide sequence ID" value="NM_001410665.1"/>
</dbReference>
<dbReference type="RefSeq" id="NP_033194.1">
    <molecule id="O88834-1"/>
    <property type="nucleotide sequence ID" value="NM_009168.3"/>
</dbReference>
<dbReference type="RefSeq" id="XP_011244636.1">
    <molecule id="O88834-2"/>
    <property type="nucleotide sequence ID" value="XM_011246334.4"/>
</dbReference>
<dbReference type="RefSeq" id="XP_030105472.1">
    <molecule id="O88834-1"/>
    <property type="nucleotide sequence ID" value="XM_030249612.1"/>
</dbReference>
<dbReference type="SMR" id="O88834"/>
<dbReference type="FunCoup" id="O88834">
    <property type="interactions" value="84"/>
</dbReference>
<dbReference type="STRING" id="10090.ENSMUSP00000153605"/>
<dbReference type="GlyGen" id="O88834">
    <property type="glycosylation" value="1 site"/>
</dbReference>
<dbReference type="iPTMnet" id="O88834"/>
<dbReference type="PhosphoSitePlus" id="O88834"/>
<dbReference type="PaxDb" id="10090-ENSMUSP00000047656"/>
<dbReference type="PeptideAtlas" id="O88834"/>
<dbReference type="ProteomicsDB" id="256999">
    <molecule id="O88834-1"/>
</dbReference>
<dbReference type="ProteomicsDB" id="257000">
    <molecule id="O88834-2"/>
</dbReference>
<dbReference type="Antibodypedia" id="2789">
    <property type="antibodies" value="87 antibodies from 22 providers"/>
</dbReference>
<dbReference type="DNASU" id="20420"/>
<dbReference type="Ensembl" id="ENSMUST00000044216.8">
    <molecule id="O88834-1"/>
    <property type="protein sequence ID" value="ENSMUSP00000047656.8"/>
    <property type="gene ID" value="ENSMUSG00000039154.9"/>
</dbReference>
<dbReference type="Ensembl" id="ENSMUST00000223629.2">
    <molecule id="O88834-2"/>
    <property type="protein sequence ID" value="ENSMUSP00000153605.2"/>
    <property type="gene ID" value="ENSMUSG00000039154.9"/>
</dbReference>
<dbReference type="GeneID" id="20420"/>
<dbReference type="KEGG" id="mmu:20420"/>
<dbReference type="UCSC" id="uc008dal.2">
    <molecule id="O88834-1"/>
    <property type="organism name" value="mouse"/>
</dbReference>
<dbReference type="UCSC" id="uc008dam.2">
    <molecule id="O88834-2"/>
    <property type="organism name" value="mouse"/>
</dbReference>
<dbReference type="AGR" id="MGI:1099461"/>
<dbReference type="CTD" id="56961"/>
<dbReference type="MGI" id="MGI:1099461">
    <property type="gene designation" value="Shd"/>
</dbReference>
<dbReference type="VEuPathDB" id="HostDB:ENSMUSG00000039154"/>
<dbReference type="eggNOG" id="ENOG502QTRD">
    <property type="taxonomic scope" value="Eukaryota"/>
</dbReference>
<dbReference type="GeneTree" id="ENSGT00940000159004"/>
<dbReference type="HOGENOM" id="CLU_029444_0_1_1"/>
<dbReference type="InParanoid" id="O88834"/>
<dbReference type="OMA" id="AKEFRRP"/>
<dbReference type="OrthoDB" id="52043at9989"/>
<dbReference type="PhylomeDB" id="O88834"/>
<dbReference type="TreeFam" id="TF325799"/>
<dbReference type="BioGRID-ORCS" id="20420">
    <property type="hits" value="1 hit in 79 CRISPR screens"/>
</dbReference>
<dbReference type="ChiTaRS" id="Shd">
    <property type="organism name" value="mouse"/>
</dbReference>
<dbReference type="PRO" id="PR:O88834"/>
<dbReference type="Proteomes" id="UP000000589">
    <property type="component" value="Chromosome 17"/>
</dbReference>
<dbReference type="RNAct" id="O88834">
    <property type="molecule type" value="protein"/>
</dbReference>
<dbReference type="Bgee" id="ENSMUSG00000039154">
    <property type="expression patterns" value="Expressed in embryonic brain and 145 other cell types or tissues"/>
</dbReference>
<dbReference type="ExpressionAtlas" id="O88834">
    <property type="expression patterns" value="baseline and differential"/>
</dbReference>
<dbReference type="CDD" id="cd10390">
    <property type="entry name" value="SH2_SHD"/>
    <property type="match status" value="1"/>
</dbReference>
<dbReference type="FunFam" id="3.30.505.10:FF:000058">
    <property type="entry name" value="SH2 domain-containing adapter protein D"/>
    <property type="match status" value="1"/>
</dbReference>
<dbReference type="Gene3D" id="3.30.505.10">
    <property type="entry name" value="SH2 domain"/>
    <property type="match status" value="1"/>
</dbReference>
<dbReference type="InterPro" id="IPR000980">
    <property type="entry name" value="SH2"/>
</dbReference>
<dbReference type="InterPro" id="IPR036860">
    <property type="entry name" value="SH2_dom_sf"/>
</dbReference>
<dbReference type="InterPro" id="IPR051846">
    <property type="entry name" value="SH2_domain_adapters"/>
</dbReference>
<dbReference type="InterPro" id="IPR035046">
    <property type="entry name" value="SHD_SH2"/>
</dbReference>
<dbReference type="PANTHER" id="PTHR15127">
    <property type="entry name" value="HEAVYWEIGHT, ISOFORM A"/>
    <property type="match status" value="1"/>
</dbReference>
<dbReference type="PANTHER" id="PTHR15127:SF33">
    <property type="entry name" value="SH2 DOMAIN-CONTAINING ADAPTER PROTEIN D"/>
    <property type="match status" value="1"/>
</dbReference>
<dbReference type="Pfam" id="PF00017">
    <property type="entry name" value="SH2"/>
    <property type="match status" value="1"/>
</dbReference>
<dbReference type="PRINTS" id="PR00401">
    <property type="entry name" value="SH2DOMAIN"/>
</dbReference>
<dbReference type="SMART" id="SM00252">
    <property type="entry name" value="SH2"/>
    <property type="match status" value="1"/>
</dbReference>
<dbReference type="SUPFAM" id="SSF55550">
    <property type="entry name" value="SH2 domain"/>
    <property type="match status" value="1"/>
</dbReference>
<dbReference type="PROSITE" id="PS50001">
    <property type="entry name" value="SH2"/>
    <property type="match status" value="1"/>
</dbReference>
<protein>
    <recommendedName>
        <fullName>SH2 domain-containing adapter protein D</fullName>
    </recommendedName>
</protein>
<feature type="chain" id="PRO_0000246774" description="SH2 domain-containing adapter protein D">
    <location>
        <begin position="1"/>
        <end position="343"/>
    </location>
</feature>
<feature type="domain" description="SH2" evidence="1">
    <location>
        <begin position="225"/>
        <end position="320"/>
    </location>
</feature>
<feature type="region of interest" description="Disordered" evidence="2">
    <location>
        <begin position="1"/>
        <end position="176"/>
    </location>
</feature>
<feature type="region of interest" description="Disordered" evidence="2">
    <location>
        <begin position="322"/>
        <end position="343"/>
    </location>
</feature>
<feature type="compositionally biased region" description="Basic and acidic residues" evidence="2">
    <location>
        <begin position="29"/>
        <end position="40"/>
    </location>
</feature>
<feature type="compositionally biased region" description="Basic and acidic residues" evidence="2">
    <location>
        <begin position="73"/>
        <end position="82"/>
    </location>
</feature>
<feature type="compositionally biased region" description="Acidic residues" evidence="2">
    <location>
        <begin position="92"/>
        <end position="102"/>
    </location>
</feature>
<feature type="compositionally biased region" description="Basic and acidic residues" evidence="2">
    <location>
        <begin position="160"/>
        <end position="176"/>
    </location>
</feature>
<feature type="splice variant" id="VSP_019860" description="In isoform 2." evidence="4">
    <original>E</original>
    <variation>EQ</variation>
    <location>
        <position position="93"/>
    </location>
</feature>
<reference key="1">
    <citation type="journal article" date="1997" name="Oncogene">
        <title>Identification and characterization of two novel SH2 domain-containing proteins from a yeast two hybrid screen with the ABL tyrosine kinase.</title>
        <authorList>
            <person name="Oda T."/>
            <person name="Kujovich J."/>
            <person name="Reis M."/>
            <person name="Newman B."/>
            <person name="Druker B.J."/>
        </authorList>
    </citation>
    <scope>NUCLEOTIDE SEQUENCE [MRNA] (ISOFORM 1)</scope>
    <scope>FUNCTION</scope>
    <scope>TISSUE SPECIFICITY</scope>
    <scope>PHOSPHORYLATION BY ABL</scope>
    <source>
        <tissue>Embryo</tissue>
    </source>
</reference>
<reference key="2">
    <citation type="journal article" date="2005" name="Science">
        <title>The transcriptional landscape of the mammalian genome.</title>
        <authorList>
            <person name="Carninci P."/>
            <person name="Kasukawa T."/>
            <person name="Katayama S."/>
            <person name="Gough J."/>
            <person name="Frith M.C."/>
            <person name="Maeda N."/>
            <person name="Oyama R."/>
            <person name="Ravasi T."/>
            <person name="Lenhard B."/>
            <person name="Wells C."/>
            <person name="Kodzius R."/>
            <person name="Shimokawa K."/>
            <person name="Bajic V.B."/>
            <person name="Brenner S.E."/>
            <person name="Batalov S."/>
            <person name="Forrest A.R."/>
            <person name="Zavolan M."/>
            <person name="Davis M.J."/>
            <person name="Wilming L.G."/>
            <person name="Aidinis V."/>
            <person name="Allen J.E."/>
            <person name="Ambesi-Impiombato A."/>
            <person name="Apweiler R."/>
            <person name="Aturaliya R.N."/>
            <person name="Bailey T.L."/>
            <person name="Bansal M."/>
            <person name="Baxter L."/>
            <person name="Beisel K.W."/>
            <person name="Bersano T."/>
            <person name="Bono H."/>
            <person name="Chalk A.M."/>
            <person name="Chiu K.P."/>
            <person name="Choudhary V."/>
            <person name="Christoffels A."/>
            <person name="Clutterbuck D.R."/>
            <person name="Crowe M.L."/>
            <person name="Dalla E."/>
            <person name="Dalrymple B.P."/>
            <person name="de Bono B."/>
            <person name="Della Gatta G."/>
            <person name="di Bernardo D."/>
            <person name="Down T."/>
            <person name="Engstrom P."/>
            <person name="Fagiolini M."/>
            <person name="Faulkner G."/>
            <person name="Fletcher C.F."/>
            <person name="Fukushima T."/>
            <person name="Furuno M."/>
            <person name="Futaki S."/>
            <person name="Gariboldi M."/>
            <person name="Georgii-Hemming P."/>
            <person name="Gingeras T.R."/>
            <person name="Gojobori T."/>
            <person name="Green R.E."/>
            <person name="Gustincich S."/>
            <person name="Harbers M."/>
            <person name="Hayashi Y."/>
            <person name="Hensch T.K."/>
            <person name="Hirokawa N."/>
            <person name="Hill D."/>
            <person name="Huminiecki L."/>
            <person name="Iacono M."/>
            <person name="Ikeo K."/>
            <person name="Iwama A."/>
            <person name="Ishikawa T."/>
            <person name="Jakt M."/>
            <person name="Kanapin A."/>
            <person name="Katoh M."/>
            <person name="Kawasawa Y."/>
            <person name="Kelso J."/>
            <person name="Kitamura H."/>
            <person name="Kitano H."/>
            <person name="Kollias G."/>
            <person name="Krishnan S.P."/>
            <person name="Kruger A."/>
            <person name="Kummerfeld S.K."/>
            <person name="Kurochkin I.V."/>
            <person name="Lareau L.F."/>
            <person name="Lazarevic D."/>
            <person name="Lipovich L."/>
            <person name="Liu J."/>
            <person name="Liuni S."/>
            <person name="McWilliam S."/>
            <person name="Madan Babu M."/>
            <person name="Madera M."/>
            <person name="Marchionni L."/>
            <person name="Matsuda H."/>
            <person name="Matsuzawa S."/>
            <person name="Miki H."/>
            <person name="Mignone F."/>
            <person name="Miyake S."/>
            <person name="Morris K."/>
            <person name="Mottagui-Tabar S."/>
            <person name="Mulder N."/>
            <person name="Nakano N."/>
            <person name="Nakauchi H."/>
            <person name="Ng P."/>
            <person name="Nilsson R."/>
            <person name="Nishiguchi S."/>
            <person name="Nishikawa S."/>
            <person name="Nori F."/>
            <person name="Ohara O."/>
            <person name="Okazaki Y."/>
            <person name="Orlando V."/>
            <person name="Pang K.C."/>
            <person name="Pavan W.J."/>
            <person name="Pavesi G."/>
            <person name="Pesole G."/>
            <person name="Petrovsky N."/>
            <person name="Piazza S."/>
            <person name="Reed J."/>
            <person name="Reid J.F."/>
            <person name="Ring B.Z."/>
            <person name="Ringwald M."/>
            <person name="Rost B."/>
            <person name="Ruan Y."/>
            <person name="Salzberg S.L."/>
            <person name="Sandelin A."/>
            <person name="Schneider C."/>
            <person name="Schoenbach C."/>
            <person name="Sekiguchi K."/>
            <person name="Semple C.A."/>
            <person name="Seno S."/>
            <person name="Sessa L."/>
            <person name="Sheng Y."/>
            <person name="Shibata Y."/>
            <person name="Shimada H."/>
            <person name="Shimada K."/>
            <person name="Silva D."/>
            <person name="Sinclair B."/>
            <person name="Sperling S."/>
            <person name="Stupka E."/>
            <person name="Sugiura K."/>
            <person name="Sultana R."/>
            <person name="Takenaka Y."/>
            <person name="Taki K."/>
            <person name="Tammoja K."/>
            <person name="Tan S.L."/>
            <person name="Tang S."/>
            <person name="Taylor M.S."/>
            <person name="Tegner J."/>
            <person name="Teichmann S.A."/>
            <person name="Ueda H.R."/>
            <person name="van Nimwegen E."/>
            <person name="Verardo R."/>
            <person name="Wei C.L."/>
            <person name="Yagi K."/>
            <person name="Yamanishi H."/>
            <person name="Zabarovsky E."/>
            <person name="Zhu S."/>
            <person name="Zimmer A."/>
            <person name="Hide W."/>
            <person name="Bult C."/>
            <person name="Grimmond S.M."/>
            <person name="Teasdale R.D."/>
            <person name="Liu E.T."/>
            <person name="Brusic V."/>
            <person name="Quackenbush J."/>
            <person name="Wahlestedt C."/>
            <person name="Mattick J.S."/>
            <person name="Hume D.A."/>
            <person name="Kai C."/>
            <person name="Sasaki D."/>
            <person name="Tomaru Y."/>
            <person name="Fukuda S."/>
            <person name="Kanamori-Katayama M."/>
            <person name="Suzuki M."/>
            <person name="Aoki J."/>
            <person name="Arakawa T."/>
            <person name="Iida J."/>
            <person name="Imamura K."/>
            <person name="Itoh M."/>
            <person name="Kato T."/>
            <person name="Kawaji H."/>
            <person name="Kawagashira N."/>
            <person name="Kawashima T."/>
            <person name="Kojima M."/>
            <person name="Kondo S."/>
            <person name="Konno H."/>
            <person name="Nakano K."/>
            <person name="Ninomiya N."/>
            <person name="Nishio T."/>
            <person name="Okada M."/>
            <person name="Plessy C."/>
            <person name="Shibata K."/>
            <person name="Shiraki T."/>
            <person name="Suzuki S."/>
            <person name="Tagami M."/>
            <person name="Waki K."/>
            <person name="Watahiki A."/>
            <person name="Okamura-Oho Y."/>
            <person name="Suzuki H."/>
            <person name="Kawai J."/>
            <person name="Hayashizaki Y."/>
        </authorList>
    </citation>
    <scope>NUCLEOTIDE SEQUENCE [LARGE SCALE MRNA] (ISOFORM 1)</scope>
    <source>
        <strain>C57BL/6J</strain>
        <tissue>Stomach</tissue>
    </source>
</reference>
<reference key="3">
    <citation type="journal article" date="2004" name="Genome Res.">
        <title>The status, quality, and expansion of the NIH full-length cDNA project: the Mammalian Gene Collection (MGC).</title>
        <authorList>
            <consortium name="The MGC Project Team"/>
        </authorList>
    </citation>
    <scope>NUCLEOTIDE SEQUENCE [LARGE SCALE MRNA] (ISOFORM 2)</scope>
    <source>
        <tissue>Jaw</tissue>
        <tissue>Limb</tissue>
    </source>
</reference>
<proteinExistence type="evidence at protein level"/>
<name>SHD_MOUSE</name>
<gene>
    <name type="primary">Shd</name>
</gene>
<organism>
    <name type="scientific">Mus musculus</name>
    <name type="common">Mouse</name>
    <dbReference type="NCBI Taxonomy" id="10090"/>
    <lineage>
        <taxon>Eukaryota</taxon>
        <taxon>Metazoa</taxon>
        <taxon>Chordata</taxon>
        <taxon>Craniata</taxon>
        <taxon>Vertebrata</taxon>
        <taxon>Euteleostomi</taxon>
        <taxon>Mammalia</taxon>
        <taxon>Eutheria</taxon>
        <taxon>Euarchontoglires</taxon>
        <taxon>Glires</taxon>
        <taxon>Rodentia</taxon>
        <taxon>Myomorpha</taxon>
        <taxon>Muroidea</taxon>
        <taxon>Muridae</taxon>
        <taxon>Murinae</taxon>
        <taxon>Mus</taxon>
        <taxon>Mus</taxon>
    </lineage>
</organism>
<evidence type="ECO:0000255" key="1">
    <source>
        <dbReference type="PROSITE-ProRule" id="PRU00191"/>
    </source>
</evidence>
<evidence type="ECO:0000256" key="2">
    <source>
        <dbReference type="SAM" id="MobiDB-lite"/>
    </source>
</evidence>
<evidence type="ECO:0000269" key="3">
    <source>
    </source>
</evidence>
<evidence type="ECO:0000303" key="4">
    <source>
    </source>
</evidence>
<accession>O88834</accession>
<accession>Q3SYI7</accession>
<comment type="function">
    <text evidence="3">May function as an adapter protein.</text>
</comment>
<comment type="alternative products">
    <event type="alternative splicing"/>
    <isoform>
        <id>O88834-1</id>
        <name>1</name>
        <sequence type="displayed"/>
    </isoform>
    <isoform>
        <id>O88834-2</id>
        <name>2</name>
        <sequence type="described" ref="VSP_019860"/>
    </isoform>
</comment>
<comment type="tissue specificity">
    <text evidence="3">Specifically expressed in brain.</text>
</comment>
<comment type="PTM">
    <text evidence="3">Tyrosine phosphorylated by ABL.</text>
</comment>
<sequence length="343" mass="38481">MAKWLRDYLNLGSRRPPPQPPTPDYTESDILRAYREQKDLDFEDPYEDSNGRAEPEVTGSGDPKYNSPRHRLIKVEAADMARAKALLGSPGEEPEAETEYSDPFDAQPQPPAPNSGYMEPYDARSVSSEQPSRAVQLYDTPYEEQATKPEDGGSSGQSRRPLEDERPADEYDQPWEWKKDHISRAFAVQFDGPDWERTPCSTKEPWRPQPAERVDTALALEKQPWFHGPLSRAEAENLLSLCKEGSYLVRLSETRAQDCILSLRSNQGSMHLKFARTRENQVVLGQHSGPFPSIPELVLHYSARPLPVQGAEHLALLYPVTSSQSSQGPCTLAAKPERGQGDP</sequence>